<proteinExistence type="inferred from homology"/>
<feature type="chain" id="PRO_0000063869" description="Beta-glucosidase">
    <location>
        <begin position="1"/>
        <end position="459"/>
    </location>
</feature>
<feature type="active site" description="Proton donor" evidence="1">
    <location>
        <position position="171"/>
    </location>
</feature>
<feature type="active site" description="Nucleophile" evidence="2 3">
    <location>
        <position position="359"/>
    </location>
</feature>
<organism>
    <name type="scientific">Agrobacterium sp. (strain ATCC 21400)</name>
    <dbReference type="NCBI Taxonomy" id="74562"/>
    <lineage>
        <taxon>Bacteria</taxon>
        <taxon>Pseudomonadati</taxon>
        <taxon>Pseudomonadota</taxon>
        <taxon>Alphaproteobacteria</taxon>
        <taxon>Hyphomicrobiales</taxon>
        <taxon>Rhizobiaceae</taxon>
        <taxon>Rhizobium/Agrobacterium group</taxon>
        <taxon>Agrobacterium</taxon>
    </lineage>
</organism>
<comment type="catalytic activity">
    <reaction>
        <text>Hydrolysis of terminal, non-reducing beta-D-glucosyl residues with release of beta-D-glucose.</text>
        <dbReference type="EC" id="3.2.1.21"/>
    </reaction>
</comment>
<comment type="similarity">
    <text evidence="4">Belongs to the glycosyl hydrolase 1 family.</text>
</comment>
<sequence>MTDPNTLAARFPGDFLFGVATASFQIEGSTKADGRKPSIWDAFCNMPGHVFGRHNGDIACDHYNRWEEDLDLIKEMGVEAYRFSLAWPRIIPDGFGPINEKGLDFYDRLVDGCKARGIKTYATLYHWDLPLTLMGDGGWASRSTAHAFQRYAKTVMARLGDRLDAVATFNEPWCAVWLSHLYGVHAPGERNMEAALAAMHHINLAHGFGVEASRHVAPKVPVGLVLNAHSAIPASDGEADLKAAERAFQFHNGAFFDPVFKGEYPAEMMEALGDRMPVVEAEDLGIISQKLDWWGLNYYTPMRVADDATPGVEFPATMPAPAVSDVKTDIGWEVYAPALHTLVETLYERYDLPECYITENGACYNMGVENGQVNDQPRLDYYAEHLGIVADLIRDGYPMRGYFAWSLMDNFEWAEGYRMRFGLVHVDYQTQVRTVKNSGKWYSALASGFPKGNHGVAKG</sequence>
<name>BGLS_AGRSA</name>
<gene>
    <name type="primary">abg</name>
</gene>
<protein>
    <recommendedName>
        <fullName>Beta-glucosidase</fullName>
        <ecNumber>3.2.1.21</ecNumber>
    </recommendedName>
    <alternativeName>
        <fullName>Amygdalase</fullName>
    </alternativeName>
    <alternativeName>
        <fullName>Beta-D-glucoside glucohydrolase</fullName>
    </alternativeName>
    <alternativeName>
        <fullName>Cellobiase</fullName>
    </alternativeName>
    <alternativeName>
        <fullName>Gentiobiase</fullName>
    </alternativeName>
</protein>
<keyword id="KW-0119">Carbohydrate metabolism</keyword>
<keyword id="KW-0136">Cellulose degradation</keyword>
<keyword id="KW-0326">Glycosidase</keyword>
<keyword id="KW-0378">Hydrolase</keyword>
<keyword id="KW-0624">Polysaccharide degradation</keyword>
<dbReference type="EC" id="3.2.1.21"/>
<dbReference type="EMBL" id="M19033">
    <property type="protein sequence ID" value="AAA22085.1"/>
    <property type="molecule type" value="Genomic_DNA"/>
</dbReference>
<dbReference type="PIR" id="A28673">
    <property type="entry name" value="GLAG"/>
</dbReference>
<dbReference type="SMR" id="P12614"/>
<dbReference type="BindingDB" id="P12614"/>
<dbReference type="ChEMBL" id="CHEMBL1075038"/>
<dbReference type="CAZy" id="GH1">
    <property type="family name" value="Glycoside Hydrolase Family 1"/>
</dbReference>
<dbReference type="GO" id="GO:0008422">
    <property type="term" value="F:beta-glucosidase activity"/>
    <property type="evidence" value="ECO:0007669"/>
    <property type="project" value="UniProtKB-EC"/>
</dbReference>
<dbReference type="GO" id="GO:0030245">
    <property type="term" value="P:cellulose catabolic process"/>
    <property type="evidence" value="ECO:0007669"/>
    <property type="project" value="UniProtKB-KW"/>
</dbReference>
<dbReference type="FunFam" id="3.20.20.80:FF:000004">
    <property type="entry name" value="Beta-glucosidase 6-phospho-beta-glucosidase"/>
    <property type="match status" value="1"/>
</dbReference>
<dbReference type="Gene3D" id="3.20.20.80">
    <property type="entry name" value="Glycosidases"/>
    <property type="match status" value="1"/>
</dbReference>
<dbReference type="InterPro" id="IPR001360">
    <property type="entry name" value="Glyco_hydro_1"/>
</dbReference>
<dbReference type="InterPro" id="IPR018120">
    <property type="entry name" value="Glyco_hydro_1_AS"/>
</dbReference>
<dbReference type="InterPro" id="IPR017736">
    <property type="entry name" value="Glyco_hydro_1_beta-glucosidase"/>
</dbReference>
<dbReference type="InterPro" id="IPR033132">
    <property type="entry name" value="Glyco_hydro_1_N_CS"/>
</dbReference>
<dbReference type="InterPro" id="IPR017853">
    <property type="entry name" value="Glycoside_hydrolase_SF"/>
</dbReference>
<dbReference type="NCBIfam" id="TIGR03356">
    <property type="entry name" value="BGL"/>
    <property type="match status" value="1"/>
</dbReference>
<dbReference type="PANTHER" id="PTHR10353">
    <property type="entry name" value="GLYCOSYL HYDROLASE"/>
    <property type="match status" value="1"/>
</dbReference>
<dbReference type="PANTHER" id="PTHR10353:SF36">
    <property type="entry name" value="LP05116P"/>
    <property type="match status" value="1"/>
</dbReference>
<dbReference type="Pfam" id="PF00232">
    <property type="entry name" value="Glyco_hydro_1"/>
    <property type="match status" value="1"/>
</dbReference>
<dbReference type="PRINTS" id="PR00131">
    <property type="entry name" value="GLHYDRLASE1"/>
</dbReference>
<dbReference type="SUPFAM" id="SSF51445">
    <property type="entry name" value="(Trans)glycosidases"/>
    <property type="match status" value="1"/>
</dbReference>
<dbReference type="PROSITE" id="PS00572">
    <property type="entry name" value="GLYCOSYL_HYDROL_F1_1"/>
    <property type="match status" value="1"/>
</dbReference>
<dbReference type="PROSITE" id="PS00653">
    <property type="entry name" value="GLYCOSYL_HYDROL_F1_2"/>
    <property type="match status" value="1"/>
</dbReference>
<evidence type="ECO:0000255" key="1"/>
<evidence type="ECO:0000255" key="2">
    <source>
        <dbReference type="PROSITE-ProRule" id="PRU10055"/>
    </source>
</evidence>
<evidence type="ECO:0000269" key="3">
    <source ref="2"/>
</evidence>
<evidence type="ECO:0000305" key="4"/>
<accession>P12614</accession>
<reference key="1">
    <citation type="journal article" date="1988" name="J. Bacteriol.">
        <title>Structure and transcription analysis of the gene encoding a cellobiase from Agrobacterium sp. strain ATCC 21400.</title>
        <authorList>
            <person name="Wakarchuk W.W."/>
            <person name="Greenberg N.M."/>
            <person name="Kilburn D.G."/>
            <person name="Miller R.C. Jr."/>
            <person name="Warren R.A.J."/>
        </authorList>
    </citation>
    <scope>NUCLEOTIDE SEQUENCE [GENOMIC DNA]</scope>
</reference>
<reference key="2">
    <citation type="journal article" date="1990" name="J. Am. Chem. Soc.">
        <title>Unequivocal demonstration of the involvement of a glutamate residue as a nucleophile in the mechanism of a 'retaining' glycosidase.</title>
        <authorList>
            <person name="Withers S.G."/>
            <person name="Warren R.A.J."/>
            <person name="Street I.P."/>
            <person name="Rupitz K."/>
            <person name="Kempton J.B."/>
            <person name="Aebersold R."/>
        </authorList>
    </citation>
    <scope>ACTIVE SITE GLU-359</scope>
</reference>